<dbReference type="EC" id="3.2.1.-"/>
<dbReference type="EMBL" id="AJ225896">
    <property type="protein sequence ID" value="CAB38101.1"/>
    <property type="molecule type" value="Genomic_DNA"/>
</dbReference>
<dbReference type="EMBL" id="AE006469">
    <property type="protein sequence ID" value="AAK65522.1"/>
    <property type="molecule type" value="Genomic_DNA"/>
</dbReference>
<dbReference type="PIR" id="H95369">
    <property type="entry name" value="H95369"/>
</dbReference>
<dbReference type="RefSeq" id="NP_436110.1">
    <property type="nucleotide sequence ID" value="NC_003037.1"/>
</dbReference>
<dbReference type="RefSeq" id="WP_010967830.1">
    <property type="nucleotide sequence ID" value="NC_003037.1"/>
</dbReference>
<dbReference type="SMR" id="Q9Z3Q2"/>
<dbReference type="CAZy" id="GH16">
    <property type="family name" value="Glycoside Hydrolase Family 16"/>
</dbReference>
<dbReference type="EnsemblBacteria" id="AAK65522">
    <property type="protein sequence ID" value="AAK65522"/>
    <property type="gene ID" value="SMa1587"/>
</dbReference>
<dbReference type="KEGG" id="sme:SMa1587"/>
<dbReference type="PATRIC" id="fig|266834.11.peg.897"/>
<dbReference type="HOGENOM" id="CLU_031273_0_0_5"/>
<dbReference type="OrthoDB" id="9809583at2"/>
<dbReference type="UniPathway" id="UPA00631"/>
<dbReference type="Proteomes" id="UP000001976">
    <property type="component" value="Plasmid pSymA"/>
</dbReference>
<dbReference type="GO" id="GO:0005576">
    <property type="term" value="C:extracellular region"/>
    <property type="evidence" value="ECO:0007669"/>
    <property type="project" value="UniProtKB-SubCell"/>
</dbReference>
<dbReference type="GO" id="GO:0005509">
    <property type="term" value="F:calcium ion binding"/>
    <property type="evidence" value="ECO:0007669"/>
    <property type="project" value="InterPro"/>
</dbReference>
<dbReference type="GO" id="GO:0004553">
    <property type="term" value="F:hydrolase activity, hydrolyzing O-glycosyl compounds"/>
    <property type="evidence" value="ECO:0007669"/>
    <property type="project" value="InterPro"/>
</dbReference>
<dbReference type="GO" id="GO:0000271">
    <property type="term" value="P:polysaccharide biosynthetic process"/>
    <property type="evidence" value="ECO:0007669"/>
    <property type="project" value="UniProtKB-KW"/>
</dbReference>
<dbReference type="CDD" id="cd08023">
    <property type="entry name" value="GH16_laminarinase_like"/>
    <property type="match status" value="1"/>
</dbReference>
<dbReference type="Gene3D" id="2.60.120.200">
    <property type="match status" value="1"/>
</dbReference>
<dbReference type="Gene3D" id="2.150.10.10">
    <property type="entry name" value="Serralysin-like metalloprotease, C-terminal"/>
    <property type="match status" value="1"/>
</dbReference>
<dbReference type="InterPro" id="IPR013320">
    <property type="entry name" value="ConA-like_dom_sf"/>
</dbReference>
<dbReference type="InterPro" id="IPR000757">
    <property type="entry name" value="GH16"/>
</dbReference>
<dbReference type="InterPro" id="IPR050546">
    <property type="entry name" value="Glycosyl_Hydrlase_16"/>
</dbReference>
<dbReference type="InterPro" id="IPR001343">
    <property type="entry name" value="Hemolysn_Ca-bd"/>
</dbReference>
<dbReference type="InterPro" id="IPR011049">
    <property type="entry name" value="Serralysin-like_metalloprot_C"/>
</dbReference>
<dbReference type="PANTHER" id="PTHR10963:SF55">
    <property type="entry name" value="GLYCOSIDE HYDROLASE FAMILY 16 PROTEIN"/>
    <property type="match status" value="1"/>
</dbReference>
<dbReference type="PANTHER" id="PTHR10963">
    <property type="entry name" value="GLYCOSYL HYDROLASE-RELATED"/>
    <property type="match status" value="1"/>
</dbReference>
<dbReference type="Pfam" id="PF00722">
    <property type="entry name" value="Glyco_hydro_16"/>
    <property type="match status" value="1"/>
</dbReference>
<dbReference type="Pfam" id="PF00353">
    <property type="entry name" value="HemolysinCabind"/>
    <property type="match status" value="1"/>
</dbReference>
<dbReference type="PRINTS" id="PR00313">
    <property type="entry name" value="CABNDNGRPT"/>
</dbReference>
<dbReference type="SUPFAM" id="SSF51120">
    <property type="entry name" value="beta-Roll"/>
    <property type="match status" value="1"/>
</dbReference>
<dbReference type="SUPFAM" id="SSF49899">
    <property type="entry name" value="Concanavalin A-like lectins/glucanases"/>
    <property type="match status" value="1"/>
</dbReference>
<dbReference type="PROSITE" id="PS51762">
    <property type="entry name" value="GH16_2"/>
    <property type="match status" value="1"/>
</dbReference>
<accession>Q9Z3Q2</accession>
<geneLocation type="plasmid">
    <name>pSymA</name>
    <name>megaplasmid 1</name>
</geneLocation>
<feature type="chain" id="PRO_0000075392" description="Endo-1,3-1,4-beta-glycanase EglC">
    <location>
        <begin position="1"/>
        <end position="465"/>
    </location>
</feature>
<feature type="repeat" description="Hemolysin-type calcium-binding 1">
    <location>
        <begin position="33"/>
        <end position="50"/>
    </location>
</feature>
<feature type="repeat" description="Hemolysin-type calcium-binding 2">
    <location>
        <begin position="105"/>
        <end position="122"/>
    </location>
</feature>
<feature type="repeat" description="Hemolysin-type calcium-binding 3">
    <location>
        <begin position="123"/>
        <end position="140"/>
    </location>
</feature>
<feature type="domain" description="GH16" evidence="2">
    <location>
        <begin position="213"/>
        <end position="462"/>
    </location>
</feature>
<feature type="active site" description="Nucleophile" evidence="1">
    <location>
        <position position="349"/>
    </location>
</feature>
<feature type="active site" description="Proton donor" evidence="1">
    <location>
        <position position="354"/>
    </location>
</feature>
<feature type="sequence conflict" description="In Ref. 1; CAB38101." evidence="3" ref="1">
    <original>I</original>
    <variation>T</variation>
    <location>
        <position position="52"/>
    </location>
</feature>
<name>EGLC_RHIME</name>
<sequence>MSRTVTNALGEPLSYGGSSTAWFSASGSGPLLYGTAGNDSMWADSSVDVTMIGDSGDDIYYLYSGVNRASEAPSAGVDTINTWMSYSLPENFENLTVTGVEGFGFGNSASNIISGGSGSQTINGGAGNDVLTGAGGADTFAFKRGNGSDLISDFGSDDVVRLEGYGFTSFDHILANVAQEGLDLKLSLADGEYLVFANTSADQLHANQFSLALDRSVLTQTFSDDFNTLQLSDGTSGVWDPKYWWAPEKGATLTGNDELQWYVNPTYQPTASANPFSVTDGVLTITAKPASQAIQAETNGYDYTSGMLTTYSSFAQTYGYFEMRADMPDDQGAWPAFWLLPGDGTWPPELDVVEMHGQDPNTVIATVHSNETGSQTSIASAARVTDTSGFHKYGVLWTEEEIVWYFDDAAIARADTPSDMHDPMYMLVNLAIGGMAGPPTDGLMGGAEMKVDYVKAYSLDADWHI</sequence>
<reference key="1">
    <citation type="journal article" date="1999" name="Mol. Gen. Genet.">
        <title>The eff-482 locus of Sinorhizobium meliloti CXM1-105 that influences symbiotic effectiveness consists of three genes encoding an endoglycanase, a transcriptional regulator and an adenylate cyclase.</title>
        <authorList>
            <person name="Sharypova L.A."/>
            <person name="Yurgel S.N."/>
            <person name="Keller M."/>
            <person name="Simarov B.V."/>
            <person name="Puehler A."/>
            <person name="Becker A."/>
        </authorList>
    </citation>
    <scope>NUCLEOTIDE SEQUENCE [GENOMIC DNA]</scope>
    <source>
        <strain>CXM1-105</strain>
    </source>
</reference>
<reference key="2">
    <citation type="journal article" date="2001" name="Proc. Natl. Acad. Sci. U.S.A.">
        <title>Nucleotide sequence and predicted functions of the entire Sinorhizobium meliloti pSymA megaplasmid.</title>
        <authorList>
            <person name="Barnett M.J."/>
            <person name="Fisher R.F."/>
            <person name="Jones T."/>
            <person name="Komp C."/>
            <person name="Abola A.P."/>
            <person name="Barloy-Hubler F."/>
            <person name="Bowser L."/>
            <person name="Capela D."/>
            <person name="Galibert F."/>
            <person name="Gouzy J."/>
            <person name="Gurjal M."/>
            <person name="Hong A."/>
            <person name="Huizar L."/>
            <person name="Hyman R.W."/>
            <person name="Kahn D."/>
            <person name="Kahn M.L."/>
            <person name="Kalman S."/>
            <person name="Keating D.H."/>
            <person name="Palm C."/>
            <person name="Peck M.C."/>
            <person name="Surzycki R."/>
            <person name="Wells D.H."/>
            <person name="Yeh K.-C."/>
            <person name="Davis R.W."/>
            <person name="Federspiel N.A."/>
            <person name="Long S.R."/>
        </authorList>
    </citation>
    <scope>NUCLEOTIDE SEQUENCE [LARGE SCALE GENOMIC DNA]</scope>
    <source>
        <strain>1021</strain>
    </source>
</reference>
<reference key="3">
    <citation type="journal article" date="2001" name="Science">
        <title>The composite genome of the legume symbiont Sinorhizobium meliloti.</title>
        <authorList>
            <person name="Galibert F."/>
            <person name="Finan T.M."/>
            <person name="Long S.R."/>
            <person name="Puehler A."/>
            <person name="Abola P."/>
            <person name="Ampe F."/>
            <person name="Barloy-Hubler F."/>
            <person name="Barnett M.J."/>
            <person name="Becker A."/>
            <person name="Boistard P."/>
            <person name="Bothe G."/>
            <person name="Boutry M."/>
            <person name="Bowser L."/>
            <person name="Buhrmester J."/>
            <person name="Cadieu E."/>
            <person name="Capela D."/>
            <person name="Chain P."/>
            <person name="Cowie A."/>
            <person name="Davis R.W."/>
            <person name="Dreano S."/>
            <person name="Federspiel N.A."/>
            <person name="Fisher R.F."/>
            <person name="Gloux S."/>
            <person name="Godrie T."/>
            <person name="Goffeau A."/>
            <person name="Golding B."/>
            <person name="Gouzy J."/>
            <person name="Gurjal M."/>
            <person name="Hernandez-Lucas I."/>
            <person name="Hong A."/>
            <person name="Huizar L."/>
            <person name="Hyman R.W."/>
            <person name="Jones T."/>
            <person name="Kahn D."/>
            <person name="Kahn M.L."/>
            <person name="Kalman S."/>
            <person name="Keating D.H."/>
            <person name="Kiss E."/>
            <person name="Komp C."/>
            <person name="Lelaure V."/>
            <person name="Masuy D."/>
            <person name="Palm C."/>
            <person name="Peck M.C."/>
            <person name="Pohl T.M."/>
            <person name="Portetelle D."/>
            <person name="Purnelle B."/>
            <person name="Ramsperger U."/>
            <person name="Surzycki R."/>
            <person name="Thebault P."/>
            <person name="Vandenbol M."/>
            <person name="Vorhoelter F.J."/>
            <person name="Weidner S."/>
            <person name="Wells D.H."/>
            <person name="Wong K."/>
            <person name="Yeh K.-C."/>
            <person name="Batut J."/>
        </authorList>
    </citation>
    <scope>NUCLEOTIDE SEQUENCE [LARGE SCALE GENOMIC DNA]</scope>
    <source>
        <strain>1021</strain>
    </source>
</reference>
<evidence type="ECO:0000250" key="1"/>
<evidence type="ECO:0000255" key="2">
    <source>
        <dbReference type="PROSITE-ProRule" id="PRU01098"/>
    </source>
</evidence>
<evidence type="ECO:0000305" key="3"/>
<proteinExistence type="inferred from homology"/>
<keyword id="KW-0270">Exopolysaccharide synthesis</keyword>
<keyword id="KW-0326">Glycosidase</keyword>
<keyword id="KW-0378">Hydrolase</keyword>
<keyword id="KW-0614">Plasmid</keyword>
<keyword id="KW-1185">Reference proteome</keyword>
<keyword id="KW-0677">Repeat</keyword>
<keyword id="KW-0964">Secreted</keyword>
<organism>
    <name type="scientific">Rhizobium meliloti (strain 1021)</name>
    <name type="common">Ensifer meliloti</name>
    <name type="synonym">Sinorhizobium meliloti</name>
    <dbReference type="NCBI Taxonomy" id="266834"/>
    <lineage>
        <taxon>Bacteria</taxon>
        <taxon>Pseudomonadati</taxon>
        <taxon>Pseudomonadota</taxon>
        <taxon>Alphaproteobacteria</taxon>
        <taxon>Hyphomicrobiales</taxon>
        <taxon>Rhizobiaceae</taxon>
        <taxon>Sinorhizobium/Ensifer group</taxon>
        <taxon>Sinorhizobium</taxon>
    </lineage>
</organism>
<gene>
    <name type="primary">eglC</name>
    <name type="ordered locus">RA0864</name>
    <name type="ORF">SMa1587</name>
</gene>
<protein>
    <recommendedName>
        <fullName>Endo-1,3-1,4-beta-glycanase EglC</fullName>
        <ecNumber>3.2.1.-</ecNumber>
    </recommendedName>
    <alternativeName>
        <fullName>Succinoglycan biosynthesis protein EglC</fullName>
    </alternativeName>
</protein>
<comment type="function">
    <text evidence="1">Cleaves high molecular weight succinoglycan to yield LMW succinoglycan. Dynamically regulates the molecular weight distribution of succinoglycan by cleaving nascent succinoglycan only during a limited period after its synthesis, perhaps before it undergoes a time-dependent change in its conformation or aggregation state (By similarity).</text>
</comment>
<comment type="pathway">
    <text>Glycan metabolism; exopolysaccharide biosynthesis.</text>
</comment>
<comment type="subcellular location">
    <subcellularLocation>
        <location evidence="1">Secreted</location>
    </subcellularLocation>
    <text evidence="1">Probably by a type-III secretion system.</text>
</comment>
<comment type="similarity">
    <text evidence="3">Belongs to the glycosyl hydrolase 16 family.</text>
</comment>